<gene>
    <name evidence="1" type="primary">lysS</name>
    <name type="ordered locus">M6_Spy0516</name>
</gene>
<evidence type="ECO:0000255" key="1">
    <source>
        <dbReference type="HAMAP-Rule" id="MF_00252"/>
    </source>
</evidence>
<evidence type="ECO:0000305" key="2"/>
<accession>Q5XD62</accession>
<dbReference type="EC" id="6.1.1.6" evidence="1"/>
<dbReference type="EMBL" id="CP000003">
    <property type="protein sequence ID" value="AAT86651.1"/>
    <property type="status" value="ALT_INIT"/>
    <property type="molecule type" value="Genomic_DNA"/>
</dbReference>
<dbReference type="RefSeq" id="WP_011017531.1">
    <property type="nucleotide sequence ID" value="NC_006086.1"/>
</dbReference>
<dbReference type="SMR" id="Q5XD62"/>
<dbReference type="KEGG" id="spa:M6_Spy0516"/>
<dbReference type="HOGENOM" id="CLU_008255_6_0_9"/>
<dbReference type="Proteomes" id="UP000001167">
    <property type="component" value="Chromosome"/>
</dbReference>
<dbReference type="GO" id="GO:0005829">
    <property type="term" value="C:cytosol"/>
    <property type="evidence" value="ECO:0007669"/>
    <property type="project" value="TreeGrafter"/>
</dbReference>
<dbReference type="GO" id="GO:0005524">
    <property type="term" value="F:ATP binding"/>
    <property type="evidence" value="ECO:0007669"/>
    <property type="project" value="UniProtKB-UniRule"/>
</dbReference>
<dbReference type="GO" id="GO:0140096">
    <property type="term" value="F:catalytic activity, acting on a protein"/>
    <property type="evidence" value="ECO:0007669"/>
    <property type="project" value="UniProtKB-ARBA"/>
</dbReference>
<dbReference type="GO" id="GO:0004824">
    <property type="term" value="F:lysine-tRNA ligase activity"/>
    <property type="evidence" value="ECO:0007669"/>
    <property type="project" value="UniProtKB-UniRule"/>
</dbReference>
<dbReference type="GO" id="GO:0000287">
    <property type="term" value="F:magnesium ion binding"/>
    <property type="evidence" value="ECO:0007669"/>
    <property type="project" value="UniProtKB-UniRule"/>
</dbReference>
<dbReference type="GO" id="GO:0016740">
    <property type="term" value="F:transferase activity"/>
    <property type="evidence" value="ECO:0007669"/>
    <property type="project" value="UniProtKB-ARBA"/>
</dbReference>
<dbReference type="GO" id="GO:0000049">
    <property type="term" value="F:tRNA binding"/>
    <property type="evidence" value="ECO:0007669"/>
    <property type="project" value="TreeGrafter"/>
</dbReference>
<dbReference type="GO" id="GO:0006430">
    <property type="term" value="P:lysyl-tRNA aminoacylation"/>
    <property type="evidence" value="ECO:0007669"/>
    <property type="project" value="UniProtKB-UniRule"/>
</dbReference>
<dbReference type="CDD" id="cd00775">
    <property type="entry name" value="LysRS_core"/>
    <property type="match status" value="1"/>
</dbReference>
<dbReference type="CDD" id="cd04322">
    <property type="entry name" value="LysRS_N"/>
    <property type="match status" value="1"/>
</dbReference>
<dbReference type="FunFam" id="2.40.50.140:FF:000024">
    <property type="entry name" value="Lysine--tRNA ligase"/>
    <property type="match status" value="1"/>
</dbReference>
<dbReference type="FunFam" id="3.30.930.10:FF:000001">
    <property type="entry name" value="Lysine--tRNA ligase"/>
    <property type="match status" value="1"/>
</dbReference>
<dbReference type="Gene3D" id="3.30.930.10">
    <property type="entry name" value="Bira Bifunctional Protein, Domain 2"/>
    <property type="match status" value="1"/>
</dbReference>
<dbReference type="Gene3D" id="2.40.50.140">
    <property type="entry name" value="Nucleic acid-binding proteins"/>
    <property type="match status" value="1"/>
</dbReference>
<dbReference type="HAMAP" id="MF_00252">
    <property type="entry name" value="Lys_tRNA_synth_class2"/>
    <property type="match status" value="1"/>
</dbReference>
<dbReference type="InterPro" id="IPR004364">
    <property type="entry name" value="Aa-tRNA-synt_II"/>
</dbReference>
<dbReference type="InterPro" id="IPR006195">
    <property type="entry name" value="aa-tRNA-synth_II"/>
</dbReference>
<dbReference type="InterPro" id="IPR045864">
    <property type="entry name" value="aa-tRNA-synth_II/BPL/LPL"/>
</dbReference>
<dbReference type="InterPro" id="IPR002313">
    <property type="entry name" value="Lys-tRNA-ligase_II"/>
</dbReference>
<dbReference type="InterPro" id="IPR044136">
    <property type="entry name" value="Lys-tRNA-ligase_II_N"/>
</dbReference>
<dbReference type="InterPro" id="IPR018149">
    <property type="entry name" value="Lys-tRNA-synth_II_C"/>
</dbReference>
<dbReference type="InterPro" id="IPR012340">
    <property type="entry name" value="NA-bd_OB-fold"/>
</dbReference>
<dbReference type="InterPro" id="IPR004365">
    <property type="entry name" value="NA-bd_OB_tRNA"/>
</dbReference>
<dbReference type="NCBIfam" id="TIGR00499">
    <property type="entry name" value="lysS_bact"/>
    <property type="match status" value="1"/>
</dbReference>
<dbReference type="NCBIfam" id="NF001756">
    <property type="entry name" value="PRK00484.1"/>
    <property type="match status" value="1"/>
</dbReference>
<dbReference type="PANTHER" id="PTHR42918:SF15">
    <property type="entry name" value="LYSINE--TRNA LIGASE, CHLOROPLASTIC_MITOCHONDRIAL"/>
    <property type="match status" value="1"/>
</dbReference>
<dbReference type="PANTHER" id="PTHR42918">
    <property type="entry name" value="LYSYL-TRNA SYNTHETASE"/>
    <property type="match status" value="1"/>
</dbReference>
<dbReference type="Pfam" id="PF00152">
    <property type="entry name" value="tRNA-synt_2"/>
    <property type="match status" value="1"/>
</dbReference>
<dbReference type="Pfam" id="PF01336">
    <property type="entry name" value="tRNA_anti-codon"/>
    <property type="match status" value="1"/>
</dbReference>
<dbReference type="PRINTS" id="PR00982">
    <property type="entry name" value="TRNASYNTHLYS"/>
</dbReference>
<dbReference type="SUPFAM" id="SSF55681">
    <property type="entry name" value="Class II aaRS and biotin synthetases"/>
    <property type="match status" value="1"/>
</dbReference>
<dbReference type="SUPFAM" id="SSF50249">
    <property type="entry name" value="Nucleic acid-binding proteins"/>
    <property type="match status" value="1"/>
</dbReference>
<dbReference type="PROSITE" id="PS50862">
    <property type="entry name" value="AA_TRNA_LIGASE_II"/>
    <property type="match status" value="1"/>
</dbReference>
<sequence>MSNQHIEELNDQQIVRREKMMALAEQGIDPFGKRFDRTANSAELKEKYADKTKEELHELNETAIVAGRLMTKRGKGKVGFAHLQDREGQIQLYVRKDSVSEDNYEIFKKADLGDFIGVEGEVMRTDMGELSIKATKLTHLSKSLRPLPEKFHGLTDIETIYRKRHLDLISNRESFDRFVTRSKMISEIRRYLDGLDFLEVETPVLHNEAGGAAARPFVTHHNAQNIDMVLRIATELHLKRLIVGGMERVYEIGRIFRNEGMDATHNPEFTSIEVYQAYADYLDIMNLTEGIIQHAAKAVKGDGPIDYQGTEIRINEPFKRVHMVDAIKEVTGVDFWPEMTVEEAIALAKEKQVPLEKHFTSVGHIINAFFEEFVEETLVQPTFVFGHPVEVSPLAKKNPEDTRFTDRFELFIMTKEYANAFTELNDPIDQLSRFEAQAQAKELGDDEATGIDYDFVEALEYGMPPTGGLGIGIDRLCMLLTNTTTIRDVLLFPTMKP</sequence>
<reference key="1">
    <citation type="journal article" date="2004" name="J. Infect. Dis.">
        <title>Progress toward characterization of the group A Streptococcus metagenome: complete genome sequence of a macrolide-resistant serotype M6 strain.</title>
        <authorList>
            <person name="Banks D.J."/>
            <person name="Porcella S.F."/>
            <person name="Barbian K.D."/>
            <person name="Beres S.B."/>
            <person name="Philips L.E."/>
            <person name="Voyich J.M."/>
            <person name="DeLeo F.R."/>
            <person name="Martin J.M."/>
            <person name="Somerville G.A."/>
            <person name="Musser J.M."/>
        </authorList>
    </citation>
    <scope>NUCLEOTIDE SEQUENCE [LARGE SCALE GENOMIC DNA]</scope>
    <source>
        <strain>ATCC BAA-946 / MGAS10394</strain>
    </source>
</reference>
<name>SYK_STRP6</name>
<organism>
    <name type="scientific">Streptococcus pyogenes serotype M6 (strain ATCC BAA-946 / MGAS10394)</name>
    <dbReference type="NCBI Taxonomy" id="286636"/>
    <lineage>
        <taxon>Bacteria</taxon>
        <taxon>Bacillati</taxon>
        <taxon>Bacillota</taxon>
        <taxon>Bacilli</taxon>
        <taxon>Lactobacillales</taxon>
        <taxon>Streptococcaceae</taxon>
        <taxon>Streptococcus</taxon>
    </lineage>
</organism>
<keyword id="KW-0030">Aminoacyl-tRNA synthetase</keyword>
<keyword id="KW-0067">ATP-binding</keyword>
<keyword id="KW-0963">Cytoplasm</keyword>
<keyword id="KW-0436">Ligase</keyword>
<keyword id="KW-0460">Magnesium</keyword>
<keyword id="KW-0479">Metal-binding</keyword>
<keyword id="KW-0547">Nucleotide-binding</keyword>
<keyword id="KW-0648">Protein biosynthesis</keyword>
<proteinExistence type="inferred from homology"/>
<comment type="catalytic activity">
    <reaction evidence="1">
        <text>tRNA(Lys) + L-lysine + ATP = L-lysyl-tRNA(Lys) + AMP + diphosphate</text>
        <dbReference type="Rhea" id="RHEA:20792"/>
        <dbReference type="Rhea" id="RHEA-COMP:9696"/>
        <dbReference type="Rhea" id="RHEA-COMP:9697"/>
        <dbReference type="ChEBI" id="CHEBI:30616"/>
        <dbReference type="ChEBI" id="CHEBI:32551"/>
        <dbReference type="ChEBI" id="CHEBI:33019"/>
        <dbReference type="ChEBI" id="CHEBI:78442"/>
        <dbReference type="ChEBI" id="CHEBI:78529"/>
        <dbReference type="ChEBI" id="CHEBI:456215"/>
        <dbReference type="EC" id="6.1.1.6"/>
    </reaction>
</comment>
<comment type="cofactor">
    <cofactor evidence="1">
        <name>Mg(2+)</name>
        <dbReference type="ChEBI" id="CHEBI:18420"/>
    </cofactor>
    <text evidence="1">Binds 3 Mg(2+) ions per subunit.</text>
</comment>
<comment type="subunit">
    <text evidence="1">Homodimer.</text>
</comment>
<comment type="subcellular location">
    <subcellularLocation>
        <location evidence="1">Cytoplasm</location>
    </subcellularLocation>
</comment>
<comment type="similarity">
    <text evidence="1">Belongs to the class-II aminoacyl-tRNA synthetase family.</text>
</comment>
<comment type="sequence caution" evidence="2">
    <conflict type="erroneous initiation">
        <sequence resource="EMBL-CDS" id="AAT86651"/>
    </conflict>
</comment>
<feature type="chain" id="PRO_0000152691" description="Lysine--tRNA ligase">
    <location>
        <begin position="1"/>
        <end position="497"/>
    </location>
</feature>
<feature type="binding site" evidence="1">
    <location>
        <position position="409"/>
    </location>
    <ligand>
        <name>Mg(2+)</name>
        <dbReference type="ChEBI" id="CHEBI:18420"/>
        <label>1</label>
    </ligand>
</feature>
<feature type="binding site" evidence="1">
    <location>
        <position position="416"/>
    </location>
    <ligand>
        <name>Mg(2+)</name>
        <dbReference type="ChEBI" id="CHEBI:18420"/>
        <label>1</label>
    </ligand>
</feature>
<feature type="binding site" evidence="1">
    <location>
        <position position="416"/>
    </location>
    <ligand>
        <name>Mg(2+)</name>
        <dbReference type="ChEBI" id="CHEBI:18420"/>
        <label>2</label>
    </ligand>
</feature>
<protein>
    <recommendedName>
        <fullName evidence="1">Lysine--tRNA ligase</fullName>
        <ecNumber evidence="1">6.1.1.6</ecNumber>
    </recommendedName>
    <alternativeName>
        <fullName evidence="1">Lysyl-tRNA synthetase</fullName>
        <shortName evidence="1">LysRS</shortName>
    </alternativeName>
</protein>